<feature type="chain" id="PRO_1000149805" description="Ribosome maturation factor RimP">
    <location>
        <begin position="1"/>
        <end position="155"/>
    </location>
</feature>
<comment type="function">
    <text evidence="1">Required for maturation of 30S ribosomal subunits.</text>
</comment>
<comment type="subcellular location">
    <subcellularLocation>
        <location evidence="1">Cytoplasm</location>
    </subcellularLocation>
</comment>
<comment type="similarity">
    <text evidence="1">Belongs to the RimP family.</text>
</comment>
<keyword id="KW-0963">Cytoplasm</keyword>
<keyword id="KW-1185">Reference proteome</keyword>
<keyword id="KW-0690">Ribosome biogenesis</keyword>
<evidence type="ECO:0000255" key="1">
    <source>
        <dbReference type="HAMAP-Rule" id="MF_01077"/>
    </source>
</evidence>
<organism>
    <name type="scientific">Staphylococcus carnosus (strain TM300)</name>
    <dbReference type="NCBI Taxonomy" id="396513"/>
    <lineage>
        <taxon>Bacteria</taxon>
        <taxon>Bacillati</taxon>
        <taxon>Bacillota</taxon>
        <taxon>Bacilli</taxon>
        <taxon>Bacillales</taxon>
        <taxon>Staphylococcaceae</taxon>
        <taxon>Staphylococcus</taxon>
    </lineage>
</organism>
<gene>
    <name evidence="1" type="primary">rimP</name>
    <name type="ordered locus">Sca_0900</name>
</gene>
<name>RIMP_STACT</name>
<protein>
    <recommendedName>
        <fullName evidence="1">Ribosome maturation factor RimP</fullName>
    </recommendedName>
</protein>
<proteinExistence type="inferred from homology"/>
<reference key="1">
    <citation type="journal article" date="2009" name="Appl. Environ. Microbiol.">
        <title>Genome analysis of the meat starter culture bacterium Staphylococcus carnosus TM300.</title>
        <authorList>
            <person name="Rosenstein R."/>
            <person name="Nerz C."/>
            <person name="Biswas L."/>
            <person name="Resch A."/>
            <person name="Raddatz G."/>
            <person name="Schuster S.C."/>
            <person name="Goetz F."/>
        </authorList>
    </citation>
    <scope>NUCLEOTIDE SEQUENCE [LARGE SCALE GENOMIC DNA]</scope>
    <source>
        <strain>TM300</strain>
    </source>
</reference>
<dbReference type="EMBL" id="AM295250">
    <property type="protein sequence ID" value="CAL27809.1"/>
    <property type="molecule type" value="Genomic_DNA"/>
</dbReference>
<dbReference type="RefSeq" id="WP_015900150.1">
    <property type="nucleotide sequence ID" value="NC_012121.1"/>
</dbReference>
<dbReference type="SMR" id="B9DPF1"/>
<dbReference type="GeneID" id="93793330"/>
<dbReference type="KEGG" id="sca:SCA_0900"/>
<dbReference type="eggNOG" id="COG0779">
    <property type="taxonomic scope" value="Bacteria"/>
</dbReference>
<dbReference type="HOGENOM" id="CLU_070525_2_0_9"/>
<dbReference type="OrthoDB" id="9805006at2"/>
<dbReference type="BioCyc" id="SCAR396513:SCA_RS04540-MONOMER"/>
<dbReference type="Proteomes" id="UP000000444">
    <property type="component" value="Chromosome"/>
</dbReference>
<dbReference type="GO" id="GO:0005829">
    <property type="term" value="C:cytosol"/>
    <property type="evidence" value="ECO:0007669"/>
    <property type="project" value="TreeGrafter"/>
</dbReference>
<dbReference type="GO" id="GO:0000028">
    <property type="term" value="P:ribosomal small subunit assembly"/>
    <property type="evidence" value="ECO:0007669"/>
    <property type="project" value="TreeGrafter"/>
</dbReference>
<dbReference type="GO" id="GO:0006412">
    <property type="term" value="P:translation"/>
    <property type="evidence" value="ECO:0007669"/>
    <property type="project" value="TreeGrafter"/>
</dbReference>
<dbReference type="CDD" id="cd01734">
    <property type="entry name" value="YlxS_C"/>
    <property type="match status" value="1"/>
</dbReference>
<dbReference type="FunFam" id="3.30.300.70:FF:000001">
    <property type="entry name" value="Ribosome maturation factor RimP"/>
    <property type="match status" value="1"/>
</dbReference>
<dbReference type="Gene3D" id="2.30.30.180">
    <property type="entry name" value="Ribosome maturation factor RimP, C-terminal domain"/>
    <property type="match status" value="1"/>
</dbReference>
<dbReference type="Gene3D" id="3.30.300.70">
    <property type="entry name" value="RimP-like superfamily, N-terminal"/>
    <property type="match status" value="1"/>
</dbReference>
<dbReference type="HAMAP" id="MF_01077">
    <property type="entry name" value="RimP"/>
    <property type="match status" value="1"/>
</dbReference>
<dbReference type="InterPro" id="IPR003728">
    <property type="entry name" value="Ribosome_maturation_RimP"/>
</dbReference>
<dbReference type="InterPro" id="IPR028998">
    <property type="entry name" value="RimP_C"/>
</dbReference>
<dbReference type="InterPro" id="IPR036847">
    <property type="entry name" value="RimP_C_sf"/>
</dbReference>
<dbReference type="InterPro" id="IPR028989">
    <property type="entry name" value="RimP_N"/>
</dbReference>
<dbReference type="InterPro" id="IPR035956">
    <property type="entry name" value="RimP_N_sf"/>
</dbReference>
<dbReference type="NCBIfam" id="NF000928">
    <property type="entry name" value="PRK00092.1-2"/>
    <property type="match status" value="1"/>
</dbReference>
<dbReference type="PANTHER" id="PTHR33867">
    <property type="entry name" value="RIBOSOME MATURATION FACTOR RIMP"/>
    <property type="match status" value="1"/>
</dbReference>
<dbReference type="PANTHER" id="PTHR33867:SF1">
    <property type="entry name" value="RIBOSOME MATURATION FACTOR RIMP"/>
    <property type="match status" value="1"/>
</dbReference>
<dbReference type="Pfam" id="PF17384">
    <property type="entry name" value="DUF150_C"/>
    <property type="match status" value="1"/>
</dbReference>
<dbReference type="Pfam" id="PF02576">
    <property type="entry name" value="RimP_N"/>
    <property type="match status" value="1"/>
</dbReference>
<dbReference type="SUPFAM" id="SSF74942">
    <property type="entry name" value="YhbC-like, C-terminal domain"/>
    <property type="match status" value="1"/>
</dbReference>
<dbReference type="SUPFAM" id="SSF75420">
    <property type="entry name" value="YhbC-like, N-terminal domain"/>
    <property type="match status" value="1"/>
</dbReference>
<accession>B9DPF1</accession>
<sequence>MSKITEQIEEIIQPVLDDLNFELVEIEFTKEGKDHFLRISIDKEGGVDLNDCTLASEKISEVMNEEDPIEQMYYLDVASPGAERPIKTDKALHDAVEQPVFVSLYAPIDGSKEWLGVLQSVTDDHIVIKAQVKEKKKEVEIPRNKIAKARHAVLI</sequence>